<reference key="1">
    <citation type="journal article" date="2005" name="Arch. Microbiol.">
        <title>The genome sequence of an anaerobic aromatic-degrading denitrifying bacterium, strain EbN1.</title>
        <authorList>
            <person name="Rabus R."/>
            <person name="Kube M."/>
            <person name="Heider J."/>
            <person name="Beck A."/>
            <person name="Heitmann K."/>
            <person name="Widdel F."/>
            <person name="Reinhardt R."/>
        </authorList>
    </citation>
    <scope>NUCLEOTIDE SEQUENCE [LARGE SCALE GENOMIC DNA]</scope>
    <source>
        <strain>DSM 19018 / LMG 30748 / EbN1</strain>
    </source>
</reference>
<proteinExistence type="inferred from homology"/>
<accession>Q5P1Z7</accession>
<sequence>MARVCQVTGKAPMVGNNVSHANNKTKRRFLPNLQNRRFWSESENRWIRLRVSNAALRTIDKKGIDVVVSELRARGEKV</sequence>
<comment type="similarity">
    <text evidence="1">Belongs to the bacterial ribosomal protein bL28 family.</text>
</comment>
<keyword id="KW-1185">Reference proteome</keyword>
<keyword id="KW-0687">Ribonucleoprotein</keyword>
<keyword id="KW-0689">Ribosomal protein</keyword>
<gene>
    <name evidence="1" type="primary">rpmB</name>
    <name type="ordered locus">AZOSEA25420</name>
    <name type="ORF">ebA4482</name>
</gene>
<dbReference type="EMBL" id="CR555306">
    <property type="protein sequence ID" value="CAI08667.1"/>
    <property type="molecule type" value="Genomic_DNA"/>
</dbReference>
<dbReference type="RefSeq" id="WP_011238351.1">
    <property type="nucleotide sequence ID" value="NC_006513.1"/>
</dbReference>
<dbReference type="SMR" id="Q5P1Z7"/>
<dbReference type="STRING" id="76114.ebA4482"/>
<dbReference type="KEGG" id="eba:ebA4482"/>
<dbReference type="eggNOG" id="COG0227">
    <property type="taxonomic scope" value="Bacteria"/>
</dbReference>
<dbReference type="HOGENOM" id="CLU_064548_3_1_4"/>
<dbReference type="OrthoDB" id="9805609at2"/>
<dbReference type="Proteomes" id="UP000006552">
    <property type="component" value="Chromosome"/>
</dbReference>
<dbReference type="GO" id="GO:0022625">
    <property type="term" value="C:cytosolic large ribosomal subunit"/>
    <property type="evidence" value="ECO:0007669"/>
    <property type="project" value="TreeGrafter"/>
</dbReference>
<dbReference type="GO" id="GO:0003735">
    <property type="term" value="F:structural constituent of ribosome"/>
    <property type="evidence" value="ECO:0007669"/>
    <property type="project" value="InterPro"/>
</dbReference>
<dbReference type="GO" id="GO:0006412">
    <property type="term" value="P:translation"/>
    <property type="evidence" value="ECO:0007669"/>
    <property type="project" value="UniProtKB-UniRule"/>
</dbReference>
<dbReference type="FunFam" id="2.30.170.40:FF:000001">
    <property type="entry name" value="50S ribosomal protein L28"/>
    <property type="match status" value="1"/>
</dbReference>
<dbReference type="Gene3D" id="2.30.170.40">
    <property type="entry name" value="Ribosomal protein L28/L24"/>
    <property type="match status" value="1"/>
</dbReference>
<dbReference type="HAMAP" id="MF_00373">
    <property type="entry name" value="Ribosomal_bL28"/>
    <property type="match status" value="1"/>
</dbReference>
<dbReference type="InterPro" id="IPR026569">
    <property type="entry name" value="Ribosomal_bL28"/>
</dbReference>
<dbReference type="InterPro" id="IPR034704">
    <property type="entry name" value="Ribosomal_bL28/bL31-like_sf"/>
</dbReference>
<dbReference type="InterPro" id="IPR001383">
    <property type="entry name" value="Ribosomal_bL28_bact-type"/>
</dbReference>
<dbReference type="InterPro" id="IPR037147">
    <property type="entry name" value="Ribosomal_bL28_sf"/>
</dbReference>
<dbReference type="NCBIfam" id="TIGR00009">
    <property type="entry name" value="L28"/>
    <property type="match status" value="1"/>
</dbReference>
<dbReference type="PANTHER" id="PTHR13528">
    <property type="entry name" value="39S RIBOSOMAL PROTEIN L28, MITOCHONDRIAL"/>
    <property type="match status" value="1"/>
</dbReference>
<dbReference type="PANTHER" id="PTHR13528:SF2">
    <property type="entry name" value="LARGE RIBOSOMAL SUBUNIT PROTEIN BL28M"/>
    <property type="match status" value="1"/>
</dbReference>
<dbReference type="Pfam" id="PF00830">
    <property type="entry name" value="Ribosomal_L28"/>
    <property type="match status" value="1"/>
</dbReference>
<dbReference type="SUPFAM" id="SSF143800">
    <property type="entry name" value="L28p-like"/>
    <property type="match status" value="1"/>
</dbReference>
<name>RL28_AROAE</name>
<organism>
    <name type="scientific">Aromatoleum aromaticum (strain DSM 19018 / LMG 30748 / EbN1)</name>
    <name type="common">Azoarcus sp. (strain EbN1)</name>
    <dbReference type="NCBI Taxonomy" id="76114"/>
    <lineage>
        <taxon>Bacteria</taxon>
        <taxon>Pseudomonadati</taxon>
        <taxon>Pseudomonadota</taxon>
        <taxon>Betaproteobacteria</taxon>
        <taxon>Rhodocyclales</taxon>
        <taxon>Rhodocyclaceae</taxon>
        <taxon>Aromatoleum</taxon>
    </lineage>
</organism>
<evidence type="ECO:0000255" key="1">
    <source>
        <dbReference type="HAMAP-Rule" id="MF_00373"/>
    </source>
</evidence>
<evidence type="ECO:0000305" key="2"/>
<feature type="chain" id="PRO_0000178420" description="Large ribosomal subunit protein bL28">
    <location>
        <begin position="1"/>
        <end position="78"/>
    </location>
</feature>
<protein>
    <recommendedName>
        <fullName evidence="1">Large ribosomal subunit protein bL28</fullName>
    </recommendedName>
    <alternativeName>
        <fullName evidence="2">50S ribosomal protein L28</fullName>
    </alternativeName>
</protein>